<comment type="function">
    <text evidence="1">Chaperone for the type III secretion of Tir. Probably stabilizes the protein, prevents inappropriate protein-proteininteractions and aids in secretion (By similarity).</text>
</comment>
<comment type="subunit">
    <text>Homodimer.</text>
</comment>
<comment type="interaction">
    <interactant intactId="EBI-6403832">
        <id>P58233</id>
    </interactant>
    <interactant intactId="EBI-6480811">
        <id>Q7DB77</id>
        <label>tir</label>
    </interactant>
    <organismsDiffer>false</organismsDiffer>
    <experiments>2</experiments>
</comment>
<comment type="subcellular location">
    <subcellularLocation>
        <location evidence="1">Cytoplasm</location>
    </subcellularLocation>
</comment>
<comment type="similarity">
    <text evidence="3">Belongs to the CesT/SycH chaperone family.</text>
</comment>
<proteinExistence type="evidence at protein level"/>
<keyword id="KW-0002">3D-structure</keyword>
<keyword id="KW-0143">Chaperone</keyword>
<keyword id="KW-0963">Cytoplasm</keyword>
<keyword id="KW-1185">Reference proteome</keyword>
<keyword id="KW-0843">Virulence</keyword>
<gene>
    <name type="primary">cesT</name>
    <name type="ordered locus">Z5111</name>
    <name type="ordered locus">ECs4560</name>
    <name type="ORF">L0026</name>
</gene>
<reference key="1">
    <citation type="journal article" date="1995" name="FEMS Microbiol. Lett.">
        <title>Cloning and nucleotide sequence of a gene upstream of the eaeA gene of enterohemorrhagic Escherichia coli O157:H7.</title>
        <authorList>
            <person name="Zhao S."/>
            <person name="Mitchell S.E."/>
            <person name="Meng J."/>
            <person name="Doyle M.P."/>
            <person name="Kresovich S."/>
        </authorList>
    </citation>
    <scope>NUCLEOTIDE SEQUENCE [GENOMIC DNA]</scope>
    <source>
        <strain>O157:H7 / HA1 / EHEC</strain>
    </source>
</reference>
<reference key="2">
    <citation type="journal article" date="1998" name="Infect. Immun.">
        <title>Molecular evolution of a pathogenicity island from enterohemorrhagic Escherichia coli O157:H7.</title>
        <authorList>
            <person name="Perna N.T."/>
            <person name="Mayhew G.F."/>
            <person name="Posfai G."/>
            <person name="Elliott S."/>
            <person name="Donnenberg M.S."/>
            <person name="Kaper J.B."/>
            <person name="Blattner F.R."/>
        </authorList>
    </citation>
    <scope>NUCLEOTIDE SEQUENCE [GENOMIC DNA]</scope>
    <source>
        <strain>O157:H7 / EDL933 / ATCC 700927 / EHEC</strain>
    </source>
</reference>
<reference key="3">
    <citation type="journal article" date="2001" name="Nature">
        <title>Genome sequence of enterohaemorrhagic Escherichia coli O157:H7.</title>
        <authorList>
            <person name="Perna N.T."/>
            <person name="Plunkett G. III"/>
            <person name="Burland V."/>
            <person name="Mau B."/>
            <person name="Glasner J.D."/>
            <person name="Rose D.J."/>
            <person name="Mayhew G.F."/>
            <person name="Evans P.S."/>
            <person name="Gregor J."/>
            <person name="Kirkpatrick H.A."/>
            <person name="Posfai G."/>
            <person name="Hackett J."/>
            <person name="Klink S."/>
            <person name="Boutin A."/>
            <person name="Shao Y."/>
            <person name="Miller L."/>
            <person name="Grotbeck E.J."/>
            <person name="Davis N.W."/>
            <person name="Lim A."/>
            <person name="Dimalanta E.T."/>
            <person name="Potamousis K."/>
            <person name="Apodaca J."/>
            <person name="Anantharaman T.S."/>
            <person name="Lin J."/>
            <person name="Yen G."/>
            <person name="Schwartz D.C."/>
            <person name="Welch R.A."/>
            <person name="Blattner F.R."/>
        </authorList>
    </citation>
    <scope>NUCLEOTIDE SEQUENCE [LARGE SCALE GENOMIC DNA]</scope>
    <source>
        <strain>O157:H7 / EDL933 / ATCC 700927 / EHEC</strain>
    </source>
</reference>
<reference key="4">
    <citation type="journal article" date="2001" name="DNA Res.">
        <title>Complete genome sequence of enterohemorrhagic Escherichia coli O157:H7 and genomic comparison with a laboratory strain K-12.</title>
        <authorList>
            <person name="Hayashi T."/>
            <person name="Makino K."/>
            <person name="Ohnishi M."/>
            <person name="Kurokawa K."/>
            <person name="Ishii K."/>
            <person name="Yokoyama K."/>
            <person name="Han C.-G."/>
            <person name="Ohtsubo E."/>
            <person name="Nakayama K."/>
            <person name="Murata T."/>
            <person name="Tanaka M."/>
            <person name="Tobe T."/>
            <person name="Iida T."/>
            <person name="Takami H."/>
            <person name="Honda T."/>
            <person name="Sasakawa C."/>
            <person name="Ogasawara N."/>
            <person name="Yasunaga T."/>
            <person name="Kuhara S."/>
            <person name="Shiba T."/>
            <person name="Hattori M."/>
            <person name="Shinagawa H."/>
        </authorList>
    </citation>
    <scope>NUCLEOTIDE SEQUENCE [LARGE SCALE GENOMIC DNA]</scope>
    <source>
        <strain>O157:H7 / Sakai / RIMD 0509952 / EHEC</strain>
    </source>
</reference>
<reference key="5">
    <citation type="journal article" date="2001" name="Nat. Struct. Biol.">
        <title>Structural and biochemical characterization of the type III secretion chaperones CesT and SigE.</title>
        <authorList>
            <person name="Luo Y."/>
            <person name="Bertero M.G."/>
            <person name="Frey E.A."/>
            <person name="Pfuetzner R.A."/>
            <person name="Wenk M.R."/>
            <person name="Creagh L."/>
            <person name="Marcus S.L."/>
            <person name="Lim D."/>
            <person name="Sicheri F."/>
            <person name="Kay C."/>
            <person name="Haynes C."/>
            <person name="Finlay B.B."/>
            <person name="Strynadka N.C.J."/>
        </authorList>
    </citation>
    <scope>X-RAY CRYSTALLOGRAPHY (2.8 ANGSTROMS)</scope>
    <scope>MUTAGENESIS</scope>
</reference>
<dbReference type="EMBL" id="U32312">
    <property type="protein sequence ID" value="AAB00110.1"/>
    <property type="molecule type" value="Genomic_DNA"/>
</dbReference>
<dbReference type="EMBL" id="AF071034">
    <property type="protein sequence ID" value="AAC31505.1"/>
    <property type="molecule type" value="Genomic_DNA"/>
</dbReference>
<dbReference type="EMBL" id="AE005174">
    <property type="protein sequence ID" value="AAG58824.1"/>
    <property type="molecule type" value="Genomic_DNA"/>
</dbReference>
<dbReference type="EMBL" id="BA000007">
    <property type="protein sequence ID" value="BAB37983.1"/>
    <property type="molecule type" value="Genomic_DNA"/>
</dbReference>
<dbReference type="PIR" id="D86045">
    <property type="entry name" value="D86045"/>
</dbReference>
<dbReference type="PIR" id="H91198">
    <property type="entry name" value="H91198"/>
</dbReference>
<dbReference type="RefSeq" id="NP_312587.1">
    <property type="nucleotide sequence ID" value="NC_002695.1"/>
</dbReference>
<dbReference type="RefSeq" id="WP_000098793.1">
    <property type="nucleotide sequence ID" value="NZ_VOAI01000011.1"/>
</dbReference>
<dbReference type="PDB" id="1K3E">
    <property type="method" value="X-ray"/>
    <property type="resolution" value="2.80 A"/>
    <property type="chains" value="A/B=1-156"/>
</dbReference>
<dbReference type="PDBsum" id="1K3E"/>
<dbReference type="SMR" id="P58233"/>
<dbReference type="IntAct" id="P58233">
    <property type="interactions" value="1"/>
</dbReference>
<dbReference type="STRING" id="155864.Z5111"/>
<dbReference type="GeneID" id="915463"/>
<dbReference type="KEGG" id="ece:Z5111"/>
<dbReference type="KEGG" id="ecs:ECs_4560"/>
<dbReference type="PATRIC" id="fig|386585.9.peg.4777"/>
<dbReference type="eggNOG" id="ENOG5032R50">
    <property type="taxonomic scope" value="Bacteria"/>
</dbReference>
<dbReference type="HOGENOM" id="CLU_1683457_0_0_6"/>
<dbReference type="OMA" id="TNDEYMM"/>
<dbReference type="EvolutionaryTrace" id="P58233"/>
<dbReference type="Proteomes" id="UP000000558">
    <property type="component" value="Chromosome"/>
</dbReference>
<dbReference type="Proteomes" id="UP000002519">
    <property type="component" value="Chromosome"/>
</dbReference>
<dbReference type="GO" id="GO:0005737">
    <property type="term" value="C:cytoplasm"/>
    <property type="evidence" value="ECO:0007669"/>
    <property type="project" value="UniProtKB-SubCell"/>
</dbReference>
<dbReference type="GO" id="GO:0030254">
    <property type="term" value="P:protein secretion by the type III secretion system"/>
    <property type="evidence" value="ECO:0007669"/>
    <property type="project" value="InterPro"/>
</dbReference>
<dbReference type="CDD" id="cd17023">
    <property type="entry name" value="T3SC_IA_CesT-like"/>
    <property type="match status" value="1"/>
</dbReference>
<dbReference type="Gene3D" id="1.10.287.390">
    <property type="match status" value="1"/>
</dbReference>
<dbReference type="Gene3D" id="3.30.1460.10">
    <property type="match status" value="1"/>
</dbReference>
<dbReference type="InterPro" id="IPR010261">
    <property type="entry name" value="Tir_chaperone"/>
</dbReference>
<dbReference type="Pfam" id="PF05932">
    <property type="entry name" value="CesT"/>
    <property type="match status" value="1"/>
</dbReference>
<dbReference type="SUPFAM" id="SSF69635">
    <property type="entry name" value="Type III secretory system chaperone-like"/>
    <property type="match status" value="1"/>
</dbReference>
<evidence type="ECO:0000250" key="1"/>
<evidence type="ECO:0000269" key="2">
    <source>
    </source>
</evidence>
<evidence type="ECO:0000305" key="3"/>
<evidence type="ECO:0007829" key="4">
    <source>
        <dbReference type="PDB" id="1K3E"/>
    </source>
</evidence>
<name>CEST_ECO57</name>
<sequence>MSSRSELLLEKFAEKIGIGSISFNENRLCSFAIDEIYYISLSDANDEYMMIYGVCGKFPTDNSNFALEILNANLWFAENGGPYLCYEAGAQSLLLALRFPLDDATPEKLENEIEVVVKSMENLYLVLHNQGITLENEHMKIEEISSSDNKHYYAGR</sequence>
<organism>
    <name type="scientific">Escherichia coli O157:H7</name>
    <dbReference type="NCBI Taxonomy" id="83334"/>
    <lineage>
        <taxon>Bacteria</taxon>
        <taxon>Pseudomonadati</taxon>
        <taxon>Pseudomonadota</taxon>
        <taxon>Gammaproteobacteria</taxon>
        <taxon>Enterobacterales</taxon>
        <taxon>Enterobacteriaceae</taxon>
        <taxon>Escherichia</taxon>
    </lineage>
</organism>
<protein>
    <recommendedName>
        <fullName>Tir chaperone</fullName>
    </recommendedName>
</protein>
<feature type="chain" id="PRO_0000216362" description="Tir chaperone">
    <location>
        <begin position="1"/>
        <end position="156"/>
    </location>
</feature>
<feature type="mutagenesis site" description="Abolishes Tir binding." evidence="2">
    <original>L</original>
    <variation>E</variation>
    <location>
        <position position="67"/>
    </location>
</feature>
<feature type="mutagenesis site" description="Abolishes Tir binding." evidence="2">
    <original>L</original>
    <variation>E</variation>
    <location>
        <position position="70"/>
    </location>
</feature>
<feature type="mutagenesis site" description="Abolishes Tir binding." evidence="2">
    <original>L</original>
    <variation>E</variation>
    <location>
        <position position="74"/>
    </location>
</feature>
<feature type="mutagenesis site" description="Abolishes Tir binding." evidence="2">
    <original>W</original>
    <variation>E</variation>
    <location>
        <position position="75"/>
    </location>
</feature>
<feature type="mutagenesis site" description="Abolishes Tir binding." evidence="2">
    <original>Y</original>
    <variation>E</variation>
    <location>
        <position position="83"/>
    </location>
</feature>
<feature type="mutagenesis site" description="Abolishes Tir binding." evidence="2">
    <original>V</original>
    <variation>E</variation>
    <location>
        <position position="126"/>
    </location>
</feature>
<feature type="helix" evidence="4">
    <location>
        <begin position="4"/>
        <end position="16"/>
    </location>
</feature>
<feature type="strand" evidence="4">
    <location>
        <begin position="30"/>
        <end position="33"/>
    </location>
</feature>
<feature type="strand" evidence="4">
    <location>
        <begin position="38"/>
        <end position="42"/>
    </location>
</feature>
<feature type="strand" evidence="4">
    <location>
        <begin position="45"/>
        <end position="57"/>
    </location>
</feature>
<feature type="helix" evidence="4">
    <location>
        <begin position="63"/>
        <end position="78"/>
    </location>
</feature>
<feature type="strand" evidence="4">
    <location>
        <begin position="83"/>
        <end position="87"/>
    </location>
</feature>
<feature type="turn" evidence="4">
    <location>
        <begin position="88"/>
        <end position="91"/>
    </location>
</feature>
<feature type="strand" evidence="4">
    <location>
        <begin position="92"/>
        <end position="100"/>
    </location>
</feature>
<feature type="helix" evidence="4">
    <location>
        <begin position="106"/>
        <end position="128"/>
    </location>
</feature>
<feature type="turn" evidence="4">
    <location>
        <begin position="129"/>
        <end position="131"/>
    </location>
</feature>
<feature type="strand" evidence="4">
    <location>
        <begin position="141"/>
        <end position="144"/>
    </location>
</feature>
<accession>P58233</accession>